<keyword id="KW-0002">3D-structure</keyword>
<keyword id="KW-0031">Aminopeptidase</keyword>
<keyword id="KW-0143">Chaperone</keyword>
<keyword id="KW-0963">Cytoplasm</keyword>
<keyword id="KW-0378">Hydrolase</keyword>
<keyword id="KW-0479">Metal-binding</keyword>
<keyword id="KW-0482">Metalloprotease</keyword>
<keyword id="KW-0645">Protease</keyword>
<keyword id="KW-1185">Reference proteome</keyword>
<keyword id="KW-0926">Vacuole</keyword>
<keyword id="KW-0862">Zinc</keyword>
<name>DNPEP_SCHPO</name>
<accession>O36014</accession>
<accession>A0AAN2HAD7</accession>
<accession>P78925</accession>
<proteinExistence type="evidence at protein level"/>
<organism>
    <name type="scientific">Schizosaccharomyces pombe (strain 972 / ATCC 24843)</name>
    <name type="common">Fission yeast</name>
    <dbReference type="NCBI Taxonomy" id="284812"/>
    <lineage>
        <taxon>Eukaryota</taxon>
        <taxon>Fungi</taxon>
        <taxon>Dikarya</taxon>
        <taxon>Ascomycota</taxon>
        <taxon>Taphrinomycotina</taxon>
        <taxon>Schizosaccharomycetes</taxon>
        <taxon>Schizosaccharomycetales</taxon>
        <taxon>Schizosaccharomycetaceae</taxon>
        <taxon>Schizosaccharomyces</taxon>
    </lineage>
</organism>
<evidence type="ECO:0000250" key="1">
    <source>
        <dbReference type="UniProtKB" id="Q9ULA0"/>
    </source>
</evidence>
<evidence type="ECO:0000269" key="2">
    <source>
    </source>
</evidence>
<evidence type="ECO:0000269" key="3">
    <source>
    </source>
</evidence>
<evidence type="ECO:0000269" key="4">
    <source>
    </source>
</evidence>
<evidence type="ECO:0000305" key="5"/>
<evidence type="ECO:0000312" key="6">
    <source>
        <dbReference type="PomBase" id="SPAC4F10.02"/>
    </source>
</evidence>
<evidence type="ECO:0007744" key="7">
    <source>
        <dbReference type="PDB" id="7DDE"/>
    </source>
</evidence>
<evidence type="ECO:0007829" key="8">
    <source>
        <dbReference type="PDB" id="7DDE"/>
    </source>
</evidence>
<protein>
    <recommendedName>
        <fullName>Aspartyl aminopeptidase 1</fullName>
        <ecNumber evidence="3">3.4.11.21</ecNumber>
    </recommendedName>
</protein>
<reference key="1">
    <citation type="journal article" date="2002" name="Nature">
        <title>The genome sequence of Schizosaccharomyces pombe.</title>
        <authorList>
            <person name="Wood V."/>
            <person name="Gwilliam R."/>
            <person name="Rajandream M.A."/>
            <person name="Lyne M.H."/>
            <person name="Lyne R."/>
            <person name="Stewart A."/>
            <person name="Sgouros J.G."/>
            <person name="Peat N."/>
            <person name="Hayles J."/>
            <person name="Baker S.G."/>
            <person name="Basham D."/>
            <person name="Bowman S."/>
            <person name="Brooks K."/>
            <person name="Brown D."/>
            <person name="Brown S."/>
            <person name="Chillingworth T."/>
            <person name="Churcher C.M."/>
            <person name="Collins M."/>
            <person name="Connor R."/>
            <person name="Cronin A."/>
            <person name="Davis P."/>
            <person name="Feltwell T."/>
            <person name="Fraser A."/>
            <person name="Gentles S."/>
            <person name="Goble A."/>
            <person name="Hamlin N."/>
            <person name="Harris D.E."/>
            <person name="Hidalgo J."/>
            <person name="Hodgson G."/>
            <person name="Holroyd S."/>
            <person name="Hornsby T."/>
            <person name="Howarth S."/>
            <person name="Huckle E.J."/>
            <person name="Hunt S."/>
            <person name="Jagels K."/>
            <person name="James K.D."/>
            <person name="Jones L."/>
            <person name="Jones M."/>
            <person name="Leather S."/>
            <person name="McDonald S."/>
            <person name="McLean J."/>
            <person name="Mooney P."/>
            <person name="Moule S."/>
            <person name="Mungall K.L."/>
            <person name="Murphy L.D."/>
            <person name="Niblett D."/>
            <person name="Odell C."/>
            <person name="Oliver K."/>
            <person name="O'Neil S."/>
            <person name="Pearson D."/>
            <person name="Quail M.A."/>
            <person name="Rabbinowitsch E."/>
            <person name="Rutherford K.M."/>
            <person name="Rutter S."/>
            <person name="Saunders D."/>
            <person name="Seeger K."/>
            <person name="Sharp S."/>
            <person name="Skelton J."/>
            <person name="Simmonds M.N."/>
            <person name="Squares R."/>
            <person name="Squares S."/>
            <person name="Stevens K."/>
            <person name="Taylor K."/>
            <person name="Taylor R.G."/>
            <person name="Tivey A."/>
            <person name="Walsh S.V."/>
            <person name="Warren T."/>
            <person name="Whitehead S."/>
            <person name="Woodward J.R."/>
            <person name="Volckaert G."/>
            <person name="Aert R."/>
            <person name="Robben J."/>
            <person name="Grymonprez B."/>
            <person name="Weltjens I."/>
            <person name="Vanstreels E."/>
            <person name="Rieger M."/>
            <person name="Schaefer M."/>
            <person name="Mueller-Auer S."/>
            <person name="Gabel C."/>
            <person name="Fuchs M."/>
            <person name="Duesterhoeft A."/>
            <person name="Fritzc C."/>
            <person name="Holzer E."/>
            <person name="Moestl D."/>
            <person name="Hilbert H."/>
            <person name="Borzym K."/>
            <person name="Langer I."/>
            <person name="Beck A."/>
            <person name="Lehrach H."/>
            <person name="Reinhardt R."/>
            <person name="Pohl T.M."/>
            <person name="Eger P."/>
            <person name="Zimmermann W."/>
            <person name="Wedler H."/>
            <person name="Wambutt R."/>
            <person name="Purnelle B."/>
            <person name="Goffeau A."/>
            <person name="Cadieu E."/>
            <person name="Dreano S."/>
            <person name="Gloux S."/>
            <person name="Lelaure V."/>
            <person name="Mottier S."/>
            <person name="Galibert F."/>
            <person name="Aves S.J."/>
            <person name="Xiang Z."/>
            <person name="Hunt C."/>
            <person name="Moore K."/>
            <person name="Hurst S.M."/>
            <person name="Lucas M."/>
            <person name="Rochet M."/>
            <person name="Gaillardin C."/>
            <person name="Tallada V.A."/>
            <person name="Garzon A."/>
            <person name="Thode G."/>
            <person name="Daga R.R."/>
            <person name="Cruzado L."/>
            <person name="Jimenez J."/>
            <person name="Sanchez M."/>
            <person name="del Rey F."/>
            <person name="Benito J."/>
            <person name="Dominguez A."/>
            <person name="Revuelta J.L."/>
            <person name="Moreno S."/>
            <person name="Armstrong J."/>
            <person name="Forsburg S.L."/>
            <person name="Cerutti L."/>
            <person name="Lowe T."/>
            <person name="McCombie W.R."/>
            <person name="Paulsen I."/>
            <person name="Potashkin J."/>
            <person name="Shpakovski G.V."/>
            <person name="Ussery D."/>
            <person name="Barrell B.G."/>
            <person name="Nurse P."/>
        </authorList>
    </citation>
    <scope>NUCLEOTIDE SEQUENCE [LARGE SCALE GENOMIC DNA]</scope>
    <source>
        <strain>972 / ATCC 24843</strain>
    </source>
</reference>
<reference key="2">
    <citation type="journal article" date="1997" name="DNA Res.">
        <title>Identification of open reading frames in Schizosaccharomyces pombe cDNAs.</title>
        <authorList>
            <person name="Yoshioka S."/>
            <person name="Kato K."/>
            <person name="Nakai K."/>
            <person name="Okayama H."/>
            <person name="Nojima H."/>
        </authorList>
    </citation>
    <scope>NUCLEOTIDE SEQUENCE [LARGE SCALE MRNA] OF 82-473</scope>
    <source>
        <strain>PR745</strain>
    </source>
</reference>
<reference key="3">
    <citation type="journal article" date="2006" name="Nat. Biotechnol.">
        <title>ORFeome cloning and global analysis of protein localization in the fission yeast Schizosaccharomyces pombe.</title>
        <authorList>
            <person name="Matsuyama A."/>
            <person name="Arai R."/>
            <person name="Yashiroda Y."/>
            <person name="Shirai A."/>
            <person name="Kamata A."/>
            <person name="Sekido S."/>
            <person name="Kobayashi Y."/>
            <person name="Hashimoto A."/>
            <person name="Hamamoto M."/>
            <person name="Hiraoka Y."/>
            <person name="Horinouchi S."/>
            <person name="Yoshida M."/>
        </authorList>
    </citation>
    <scope>SUBCELLULAR LOCATION [LARGE SCALE ANALYSIS]</scope>
</reference>
<reference key="4">
    <citation type="journal article" date="2009" name="BMB Rep.">
        <title>Aspartyl aminopeptidase of Schizosaccharomyces pombe has a molecular chaperone function.</title>
        <authorList>
            <person name="Lee S."/>
            <person name="Kim J.S."/>
            <person name="Yun C.H."/>
            <person name="Chae H.Z."/>
            <person name="Kim K."/>
        </authorList>
    </citation>
    <scope>CATALYTIC ACTIVITY</scope>
    <scope>FUNCTION</scope>
</reference>
<reference evidence="7" key="5">
    <citation type="journal article" date="2021" name="EMBO J.">
        <title>Molecular and structural mechanisms of ZZ domain-mediated cargo selection by Nbr1.</title>
        <authorList>
            <person name="Wang Y.Y."/>
            <person name="Zhang J."/>
            <person name="Liu X.M."/>
            <person name="Li Y."/>
            <person name="Sui J."/>
            <person name="Dong M.Q."/>
            <person name="Ye K."/>
            <person name="Du L.L."/>
        </authorList>
    </citation>
    <scope>STRUCTURE BY ELECTRON MICROSCOPY (2.26 ANGSTROMS) IN COMPLEX WITH ZN(2+)</scope>
    <scope>IDENTIFICATION OF PROBABLE INITIATION SITE</scope>
    <scope>SUBCELLULAR LOCATION</scope>
    <scope>INTERACTION WITH NBR1</scope>
</reference>
<gene>
    <name type="primary">ape4</name>
    <name type="synonym">aap1</name>
    <name type="synonym">ppp20</name>
    <name evidence="6" type="ORF">SPAC4F10.02</name>
</gene>
<comment type="function">
    <text evidence="3">Aspartyl aminopeptidase that is able to remove aspartyl residue at N-terminus of angiotensin I. Also acts as a chaperone and efficiently suppressed the thermal aggregation of citrate synthase.</text>
</comment>
<comment type="catalytic activity">
    <reaction evidence="3">
        <text>Release of an N-terminal aspartate or glutamate from a peptide, with a preference for aspartate.</text>
        <dbReference type="EC" id="3.4.11.21"/>
    </reaction>
</comment>
<comment type="cofactor">
    <cofactor evidence="4">
        <name>Zn(2+)</name>
        <dbReference type="ChEBI" id="CHEBI:29105"/>
    </cofactor>
    <text evidence="4">Binds 2 Zn(2+) ions per subunit.</text>
</comment>
<comment type="subunit">
    <text evidence="4">Tetrahedron-shaped homododecamer built from six homodimers (PubMed:34169534). Interacts with autophagy receptor Nbr1 (PubMed:34169534).</text>
</comment>
<comment type="subcellular location">
    <subcellularLocation>
        <location evidence="2">Cytoplasm</location>
    </subcellularLocation>
    <subcellularLocation>
        <location evidence="4">Vacuole lumen</location>
    </subcellularLocation>
    <text evidence="4">Transported from the cytosol into the vacuole during selective autophagy. This functions through Nbr1-mediated vacuolar targeting (NVT), in which the autophagy receptor Nbr1 cooperates with the endosomal sorting complexes required for transport (ESCRTs) to transport cytoplasmic materials into the vacuole.</text>
</comment>
<comment type="similarity">
    <text evidence="5">Belongs to the peptidase M18 family.</text>
</comment>
<feature type="chain" id="PRO_0000173454" description="Aspartyl aminopeptidase 1">
    <location>
        <begin position="1"/>
        <end position="473"/>
    </location>
</feature>
<feature type="binding site" evidence="4 7">
    <location>
        <position position="93"/>
    </location>
    <ligand>
        <name>Zn(2+)</name>
        <dbReference type="ChEBI" id="CHEBI:29105"/>
        <label>1</label>
    </ligand>
</feature>
<feature type="binding site" evidence="1">
    <location>
        <position position="168"/>
    </location>
    <ligand>
        <name>substrate</name>
    </ligand>
</feature>
<feature type="binding site" evidence="4 7">
    <location>
        <position position="262"/>
    </location>
    <ligand>
        <name>Zn(2+)</name>
        <dbReference type="ChEBI" id="CHEBI:29105"/>
        <label>1</label>
    </ligand>
</feature>
<feature type="binding site" evidence="4 7">
    <location>
        <position position="262"/>
    </location>
    <ligand>
        <name>Zn(2+)</name>
        <dbReference type="ChEBI" id="CHEBI:29105"/>
        <label>2</label>
    </ligand>
</feature>
<feature type="binding site" evidence="1">
    <location>
        <position position="298"/>
    </location>
    <ligand>
        <name>substrate</name>
    </ligand>
</feature>
<feature type="binding site" evidence="4 7">
    <location>
        <position position="298"/>
    </location>
    <ligand>
        <name>Zn(2+)</name>
        <dbReference type="ChEBI" id="CHEBI:29105"/>
        <label>1</label>
    </ligand>
</feature>
<feature type="binding site" evidence="4 7">
    <location>
        <position position="299"/>
    </location>
    <ligand>
        <name>Zn(2+)</name>
        <dbReference type="ChEBI" id="CHEBI:29105"/>
        <label>1</label>
    </ligand>
</feature>
<feature type="binding site" evidence="4 7">
    <location>
        <position position="299"/>
    </location>
    <ligand>
        <name>Zn(2+)</name>
        <dbReference type="ChEBI" id="CHEBI:29105"/>
        <label>2</label>
    </ligand>
</feature>
<feature type="binding site" evidence="1">
    <location>
        <position position="343"/>
    </location>
    <ligand>
        <name>substrate</name>
    </ligand>
</feature>
<feature type="binding site" evidence="4 7">
    <location>
        <position position="343"/>
    </location>
    <ligand>
        <name>Zn(2+)</name>
        <dbReference type="ChEBI" id="CHEBI:29105"/>
        <label>1</label>
    </ligand>
</feature>
<feature type="binding site" evidence="1">
    <location>
        <position position="346"/>
    </location>
    <ligand>
        <name>substrate</name>
    </ligand>
</feature>
<feature type="binding site" evidence="1">
    <location>
        <position position="371"/>
    </location>
    <ligand>
        <name>substrate</name>
    </ligand>
</feature>
<feature type="binding site" evidence="1">
    <location>
        <position position="378"/>
    </location>
    <ligand>
        <name>substrate</name>
    </ligand>
</feature>
<feature type="binding site" evidence="4 7">
    <location>
        <position position="437"/>
    </location>
    <ligand>
        <name>Zn(2+)</name>
        <dbReference type="ChEBI" id="CHEBI:29105"/>
        <label>2</label>
    </ligand>
</feature>
<feature type="sequence conflict" description="In Ref. 2; BAA13937." evidence="5" ref="2">
    <original>KP</original>
    <variation>MI</variation>
    <location>
        <begin position="82"/>
        <end position="83"/>
    </location>
</feature>
<feature type="sequence conflict" description="In Ref. 2; BAA13937." evidence="5" ref="2">
    <original>FC</original>
    <variation>SG</variation>
    <location>
        <begin position="268"/>
        <end position="269"/>
    </location>
</feature>
<feature type="turn" evidence="8">
    <location>
        <begin position="2"/>
        <end position="4"/>
    </location>
</feature>
<feature type="helix" evidence="8">
    <location>
        <begin position="5"/>
        <end position="17"/>
    </location>
</feature>
<feature type="helix" evidence="8">
    <location>
        <begin position="22"/>
        <end position="35"/>
    </location>
</feature>
<feature type="strand" evidence="8">
    <location>
        <begin position="39"/>
        <end position="41"/>
    </location>
</feature>
<feature type="turn" evidence="8">
    <location>
        <begin position="48"/>
        <end position="50"/>
    </location>
</feature>
<feature type="strand" evidence="8">
    <location>
        <begin position="56"/>
        <end position="61"/>
    </location>
</feature>
<feature type="turn" evidence="8">
    <location>
        <begin position="62"/>
        <end position="64"/>
    </location>
</feature>
<feature type="strand" evidence="8">
    <location>
        <begin position="65"/>
        <end position="71"/>
    </location>
</feature>
<feature type="strand" evidence="8">
    <location>
        <begin position="81"/>
        <end position="87"/>
    </location>
</feature>
<feature type="strand" evidence="8">
    <location>
        <begin position="92"/>
        <end position="103"/>
    </location>
</feature>
<feature type="strand" evidence="8">
    <location>
        <begin position="106"/>
        <end position="116"/>
    </location>
</feature>
<feature type="helix" evidence="8">
    <location>
        <begin position="119"/>
        <end position="122"/>
    </location>
</feature>
<feature type="strand" evidence="8">
    <location>
        <begin position="127"/>
        <end position="136"/>
    </location>
</feature>
<feature type="strand" evidence="8">
    <location>
        <begin position="142"/>
        <end position="156"/>
    </location>
</feature>
<feature type="turn" evidence="8">
    <location>
        <begin position="161"/>
        <end position="163"/>
    </location>
</feature>
<feature type="helix" evidence="8">
    <location>
        <begin position="165"/>
        <end position="167"/>
    </location>
</feature>
<feature type="turn" evidence="8">
    <location>
        <begin position="175"/>
        <end position="178"/>
    </location>
</feature>
<feature type="strand" evidence="8">
    <location>
        <begin position="182"/>
        <end position="185"/>
    </location>
</feature>
<feature type="helix" evidence="8">
    <location>
        <begin position="186"/>
        <end position="188"/>
    </location>
</feature>
<feature type="strand" evidence="8">
    <location>
        <begin position="196"/>
        <end position="198"/>
    </location>
</feature>
<feature type="helix" evidence="8">
    <location>
        <begin position="204"/>
        <end position="215"/>
    </location>
</feature>
<feature type="strand" evidence="8">
    <location>
        <begin position="218"/>
        <end position="220"/>
    </location>
</feature>
<feature type="helix" evidence="8">
    <location>
        <begin position="224"/>
        <end position="226"/>
    </location>
</feature>
<feature type="strand" evidence="8">
    <location>
        <begin position="227"/>
        <end position="236"/>
    </location>
</feature>
<feature type="strand" evidence="8">
    <location>
        <begin position="241"/>
        <end position="244"/>
    </location>
</feature>
<feature type="strand" evidence="8">
    <location>
        <begin position="249"/>
        <end position="254"/>
    </location>
</feature>
<feature type="turn" evidence="8">
    <location>
        <begin position="255"/>
        <end position="257"/>
    </location>
</feature>
<feature type="helix" evidence="8">
    <location>
        <begin position="258"/>
        <end position="270"/>
    </location>
</feature>
<feature type="strand" evidence="8">
    <location>
        <begin position="273"/>
        <end position="276"/>
    </location>
</feature>
<feature type="strand" evidence="8">
    <location>
        <begin position="282"/>
        <end position="290"/>
    </location>
</feature>
<feature type="turn" evidence="8">
    <location>
        <begin position="292"/>
        <end position="295"/>
    </location>
</feature>
<feature type="strand" evidence="8">
    <location>
        <begin position="298"/>
        <end position="301"/>
    </location>
</feature>
<feature type="helix" evidence="8">
    <location>
        <begin position="306"/>
        <end position="315"/>
    </location>
</feature>
<feature type="helix" evidence="8">
    <location>
        <begin position="323"/>
        <end position="329"/>
    </location>
</feature>
<feature type="strand" evidence="8">
    <location>
        <begin position="332"/>
        <end position="336"/>
    </location>
</feature>
<feature type="helix" evidence="8">
    <location>
        <begin position="344"/>
        <end position="349"/>
    </location>
</feature>
<feature type="strand" evidence="8">
    <location>
        <begin position="352"/>
        <end position="354"/>
    </location>
</feature>
<feature type="strand" evidence="8">
    <location>
        <begin position="362"/>
        <end position="365"/>
    </location>
</feature>
<feature type="strand" evidence="8">
    <location>
        <begin position="370"/>
        <end position="372"/>
    </location>
</feature>
<feature type="helix" evidence="8">
    <location>
        <begin position="376"/>
        <end position="389"/>
    </location>
</feature>
<feature type="strand" evidence="8">
    <location>
        <begin position="393"/>
        <end position="396"/>
    </location>
</feature>
<feature type="helix" evidence="8">
    <location>
        <begin position="409"/>
        <end position="416"/>
    </location>
</feature>
<feature type="strand" evidence="8">
    <location>
        <begin position="419"/>
        <end position="424"/>
    </location>
</feature>
<feature type="strand" evidence="8">
    <location>
        <begin position="426"/>
        <end position="429"/>
    </location>
</feature>
<feature type="strand" evidence="8">
    <location>
        <begin position="432"/>
        <end position="439"/>
    </location>
</feature>
<feature type="helix" evidence="8">
    <location>
        <begin position="440"/>
        <end position="454"/>
    </location>
</feature>
<feature type="helix" evidence="8">
    <location>
        <begin position="456"/>
        <end position="459"/>
    </location>
</feature>
<feature type="strand" evidence="8">
    <location>
        <begin position="460"/>
        <end position="464"/>
    </location>
</feature>
<dbReference type="EC" id="3.4.11.21" evidence="3"/>
<dbReference type="EMBL" id="CU329670">
    <property type="protein sequence ID" value="CAK9839011.1"/>
    <property type="molecule type" value="Genomic_DNA"/>
</dbReference>
<dbReference type="EMBL" id="D89276">
    <property type="protein sequence ID" value="BAA13937.1"/>
    <property type="molecule type" value="mRNA"/>
</dbReference>
<dbReference type="PIR" id="T38806">
    <property type="entry name" value="T38806"/>
</dbReference>
<dbReference type="PIR" id="T43206">
    <property type="entry name" value="T43206"/>
</dbReference>
<dbReference type="RefSeq" id="NP_594745.1">
    <property type="nucleotide sequence ID" value="NM_001020172.2"/>
</dbReference>
<dbReference type="PDB" id="7DDE">
    <property type="method" value="EM"/>
    <property type="resolution" value="2.26 A"/>
    <property type="chains" value="A/C/E/G/I/K/M/O/Q/S/V/X=7-473"/>
</dbReference>
<dbReference type="PDBsum" id="7DDE"/>
<dbReference type="SMR" id="O36014"/>
<dbReference type="BioGRID" id="280020">
    <property type="interactions" value="3"/>
</dbReference>
<dbReference type="FunCoup" id="O36014">
    <property type="interactions" value="332"/>
</dbReference>
<dbReference type="STRING" id="284812.O36014"/>
<dbReference type="PaxDb" id="4896-SPAC4F10.02.1"/>
<dbReference type="EnsemblFungi" id="SPAC4F10.02.1">
    <property type="protein sequence ID" value="SPAC4F10.02.1:pep"/>
    <property type="gene ID" value="SPAC4F10.02"/>
</dbReference>
<dbReference type="GeneID" id="2543605"/>
<dbReference type="KEGG" id="spo:2543605"/>
<dbReference type="PomBase" id="SPAC4F10.02">
    <property type="gene designation" value="ape4"/>
</dbReference>
<dbReference type="VEuPathDB" id="FungiDB:SPAC4F10.02"/>
<dbReference type="eggNOG" id="KOG2596">
    <property type="taxonomic scope" value="Eukaryota"/>
</dbReference>
<dbReference type="HOGENOM" id="CLU_019532_2_0_1"/>
<dbReference type="InParanoid" id="O36014"/>
<dbReference type="OMA" id="GPILKVN"/>
<dbReference type="PhylomeDB" id="O36014"/>
<dbReference type="BRENDA" id="3.4.11.21">
    <property type="organism ID" value="5613"/>
</dbReference>
<dbReference type="PRO" id="PR:O36014"/>
<dbReference type="Proteomes" id="UP000002485">
    <property type="component" value="Chromosome I"/>
</dbReference>
<dbReference type="GO" id="GO:0005737">
    <property type="term" value="C:cytoplasm"/>
    <property type="evidence" value="ECO:0007669"/>
    <property type="project" value="UniProtKB-ARBA"/>
</dbReference>
<dbReference type="GO" id="GO:0005829">
    <property type="term" value="C:cytosol"/>
    <property type="evidence" value="ECO:0007005"/>
    <property type="project" value="PomBase"/>
</dbReference>
<dbReference type="GO" id="GO:0000324">
    <property type="term" value="C:fungal-type vacuole"/>
    <property type="evidence" value="ECO:0000318"/>
    <property type="project" value="GO_Central"/>
</dbReference>
<dbReference type="GO" id="GO:0000328">
    <property type="term" value="C:fungal-type vacuole lumen"/>
    <property type="evidence" value="ECO:0000314"/>
    <property type="project" value="PomBase"/>
</dbReference>
<dbReference type="GO" id="GO:0004177">
    <property type="term" value="F:aminopeptidase activity"/>
    <property type="evidence" value="ECO:0007669"/>
    <property type="project" value="UniProtKB-KW"/>
</dbReference>
<dbReference type="GO" id="GO:0070006">
    <property type="term" value="F:metalloaminopeptidase activity"/>
    <property type="evidence" value="ECO:0000314"/>
    <property type="project" value="PomBase"/>
</dbReference>
<dbReference type="GO" id="GO:0008237">
    <property type="term" value="F:metallopeptidase activity"/>
    <property type="evidence" value="ECO:0007669"/>
    <property type="project" value="UniProtKB-KW"/>
</dbReference>
<dbReference type="GO" id="GO:0008270">
    <property type="term" value="F:zinc ion binding"/>
    <property type="evidence" value="ECO:0007669"/>
    <property type="project" value="InterPro"/>
</dbReference>
<dbReference type="GO" id="GO:0006457">
    <property type="term" value="P:protein folding"/>
    <property type="evidence" value="ECO:0000314"/>
    <property type="project" value="PomBase"/>
</dbReference>
<dbReference type="GO" id="GO:0006508">
    <property type="term" value="P:proteolysis"/>
    <property type="evidence" value="ECO:0007669"/>
    <property type="project" value="UniProtKB-KW"/>
</dbReference>
<dbReference type="CDD" id="cd05658">
    <property type="entry name" value="M18_DAP"/>
    <property type="match status" value="1"/>
</dbReference>
<dbReference type="FunFam" id="2.30.250.10:FF:000001">
    <property type="entry name" value="Aspartyl aminopeptidase 1"/>
    <property type="match status" value="1"/>
</dbReference>
<dbReference type="Gene3D" id="2.30.250.10">
    <property type="entry name" value="Aminopeptidase i, Domain 2"/>
    <property type="match status" value="1"/>
</dbReference>
<dbReference type="Gene3D" id="3.40.630.10">
    <property type="entry name" value="Zn peptidases"/>
    <property type="match status" value="1"/>
</dbReference>
<dbReference type="InterPro" id="IPR001948">
    <property type="entry name" value="Peptidase_M18"/>
</dbReference>
<dbReference type="InterPro" id="IPR023358">
    <property type="entry name" value="Peptidase_M18_dom2"/>
</dbReference>
<dbReference type="NCBIfam" id="NF002759">
    <property type="entry name" value="PRK02813.1"/>
    <property type="match status" value="1"/>
</dbReference>
<dbReference type="PANTHER" id="PTHR28570">
    <property type="entry name" value="ASPARTYL AMINOPEPTIDASE"/>
    <property type="match status" value="1"/>
</dbReference>
<dbReference type="PANTHER" id="PTHR28570:SF3">
    <property type="entry name" value="ASPARTYL AMINOPEPTIDASE"/>
    <property type="match status" value="1"/>
</dbReference>
<dbReference type="Pfam" id="PF02127">
    <property type="entry name" value="Peptidase_M18"/>
    <property type="match status" value="1"/>
</dbReference>
<dbReference type="PRINTS" id="PR00932">
    <property type="entry name" value="AMINO1PTASE"/>
</dbReference>
<dbReference type="SUPFAM" id="SSF101821">
    <property type="entry name" value="Aminopeptidase/glucanase lid domain"/>
    <property type="match status" value="1"/>
</dbReference>
<dbReference type="SUPFAM" id="SSF53187">
    <property type="entry name" value="Zn-dependent exopeptidases"/>
    <property type="match status" value="1"/>
</dbReference>
<sequence length="473" mass="52436">MQLHGKMTATAKSCALDFLDFVNASPTPYHAVQNLAEHYMSHGFQYLSEKSDWQSKIEPGNSYFVTRNKSSIIAFSIGKKWKPGNGFSIIATHTDSPTLRLKPKSQKSAYGYLQVGVEKYGGGIWHTWFDRDLSLAGRVMVEEEDGRVIQYNVHIDRPLLRIPTLAIHLDPSANSSFSFNMETEFVPLIGLENELAKEETSDNGDKYHHPVLLSLLANEISKSLETTIDPSKIVDFELILGDAEKARLGGIHEEFVFSPRLDNLGMTFCASQALTKSLENNSLDNESCVRVVPSFDHEEIGSVSAQGAESTFLPAVLQRICELGKESSLFSISMVKSFLVSADMAHAMHPNYSSRYENSNTPFLNKGTVIKVNANQRYTTNSAGIVLLKKVAQLADVPIQSFVVRNDSPCGSTIGPKLAAMTGMRTLDLGNPMLSMHSCREMCGSKDFEYAVVLFSSFFQNFANLEEKIIIDE</sequence>